<feature type="chain" id="PRO_0000148087" description="ATP-dependent protease subunit HslV">
    <location>
        <begin position="1"/>
        <end position="182"/>
    </location>
</feature>
<feature type="active site" evidence="1">
    <location>
        <position position="6"/>
    </location>
</feature>
<feature type="binding site" evidence="1">
    <location>
        <position position="164"/>
    </location>
    <ligand>
        <name>Na(+)</name>
        <dbReference type="ChEBI" id="CHEBI:29101"/>
    </ligand>
</feature>
<feature type="binding site" evidence="1">
    <location>
        <position position="167"/>
    </location>
    <ligand>
        <name>Na(+)</name>
        <dbReference type="ChEBI" id="CHEBI:29101"/>
    </ligand>
</feature>
<feature type="binding site" evidence="1">
    <location>
        <position position="170"/>
    </location>
    <ligand>
        <name>Na(+)</name>
        <dbReference type="ChEBI" id="CHEBI:29101"/>
    </ligand>
</feature>
<feature type="sequence conflict" description="In Ref. 2; AAB04621." evidence="2" ref="2">
    <original>A</original>
    <variation>R</variation>
    <location>
        <position position="71"/>
    </location>
</feature>
<accession>Q57209</accession>
<accession>Q44940</accession>
<organism>
    <name type="scientific">Borreliella burgdorferi (strain ATCC 35210 / DSM 4680 / CIP 102532 / B31)</name>
    <name type="common">Borrelia burgdorferi</name>
    <dbReference type="NCBI Taxonomy" id="224326"/>
    <lineage>
        <taxon>Bacteria</taxon>
        <taxon>Pseudomonadati</taxon>
        <taxon>Spirochaetota</taxon>
        <taxon>Spirochaetia</taxon>
        <taxon>Spirochaetales</taxon>
        <taxon>Borreliaceae</taxon>
        <taxon>Borreliella</taxon>
    </lineage>
</organism>
<reference key="1">
    <citation type="submission" date="1995-12" db="EMBL/GenBank/DDBJ databases">
        <authorList>
            <person name="Dunn J.J."/>
            <person name="Butler-Loffredo L."/>
            <person name="Kieleczawa J."/>
            <person name="Medalle J."/>
            <person name="Luft B.J."/>
        </authorList>
    </citation>
    <scope>NUCLEOTIDE SEQUENCE [GENOMIC DNA]</scope>
    <source>
        <strain>ATCC 35210 / DSM 4680 / CIP 102532 / B31</strain>
    </source>
</reference>
<reference key="2">
    <citation type="submission" date="1996-02" db="EMBL/GenBank/DDBJ databases">
        <authorList>
            <person name="Ge Y."/>
            <person name="Saint-Girons I."/>
            <person name="Old I.G."/>
            <person name="Yelton D.B."/>
            <person name="Charon N.W."/>
        </authorList>
    </citation>
    <scope>NUCLEOTIDE SEQUENCE [GENOMIC DNA]</scope>
    <source>
        <strain>212</strain>
    </source>
</reference>
<reference key="3">
    <citation type="journal article" date="1997" name="Nature">
        <title>Genomic sequence of a Lyme disease spirochaete, Borrelia burgdorferi.</title>
        <authorList>
            <person name="Fraser C.M."/>
            <person name="Casjens S."/>
            <person name="Huang W.M."/>
            <person name="Sutton G.G."/>
            <person name="Clayton R.A."/>
            <person name="Lathigra R."/>
            <person name="White O."/>
            <person name="Ketchum K.A."/>
            <person name="Dodson R.J."/>
            <person name="Hickey E.K."/>
            <person name="Gwinn M.L."/>
            <person name="Dougherty B.A."/>
            <person name="Tomb J.-F."/>
            <person name="Fleischmann R.D."/>
            <person name="Richardson D.L."/>
            <person name="Peterson J.D."/>
            <person name="Kerlavage A.R."/>
            <person name="Quackenbush J."/>
            <person name="Salzberg S.L."/>
            <person name="Hanson M."/>
            <person name="van Vugt R."/>
            <person name="Palmer N."/>
            <person name="Adams M.D."/>
            <person name="Gocayne J.D."/>
            <person name="Weidman J.F."/>
            <person name="Utterback T.R."/>
            <person name="Watthey L."/>
            <person name="McDonald L.A."/>
            <person name="Artiach P."/>
            <person name="Bowman C."/>
            <person name="Garland S.A."/>
            <person name="Fujii C."/>
            <person name="Cotton M.D."/>
            <person name="Horst K."/>
            <person name="Roberts K.M."/>
            <person name="Hatch B."/>
            <person name="Smith H.O."/>
            <person name="Venter J.C."/>
        </authorList>
    </citation>
    <scope>NUCLEOTIDE SEQUENCE [LARGE SCALE GENOMIC DNA]</scope>
    <source>
        <strain>ATCC 35210 / DSM 4680 / CIP 102532 / B31</strain>
    </source>
</reference>
<evidence type="ECO:0000255" key="1">
    <source>
        <dbReference type="HAMAP-Rule" id="MF_00248"/>
    </source>
</evidence>
<evidence type="ECO:0000305" key="2"/>
<sequence length="182" mass="19637">MSFKGTTVIAIKKNGKTVVAADGQVTFGHTVLKSNAIKIRKLLNGKILAGFAGSTSDAITLFEKFEEKIKAKGDGLIDIKRAAVDLAKDWRSDKILHKLEAMMLVADSNNILLISGTGDVVEPEEDVISIGSGGNYAYSAALAYMENKKLSAFEVALRSLKIAARVCIYTNSNIVLEEIENE</sequence>
<comment type="function">
    <text evidence="1">Protease subunit of a proteasome-like degradation complex believed to be a general protein degrading machinery.</text>
</comment>
<comment type="catalytic activity">
    <reaction evidence="1">
        <text>ATP-dependent cleavage of peptide bonds with broad specificity.</text>
        <dbReference type="EC" id="3.4.25.2"/>
    </reaction>
</comment>
<comment type="activity regulation">
    <text evidence="1">Allosterically activated by HslU binding.</text>
</comment>
<comment type="subunit">
    <text evidence="1">A double ring-shaped homohexamer of HslV is capped on each side by a ring-shaped HslU homohexamer. The assembly of the HslU/HslV complex is dependent on binding of ATP.</text>
</comment>
<comment type="subcellular location">
    <subcellularLocation>
        <location evidence="1">Cytoplasm</location>
    </subcellularLocation>
</comment>
<comment type="similarity">
    <text evidence="1">Belongs to the peptidase T1B family. HslV subfamily.</text>
</comment>
<proteinExistence type="inferred from homology"/>
<protein>
    <recommendedName>
        <fullName evidence="1">ATP-dependent protease subunit HslV</fullName>
        <ecNumber evidence="1">3.4.25.2</ecNumber>
    </recommendedName>
</protein>
<name>HSLV_BORBU</name>
<keyword id="KW-0021">Allosteric enzyme</keyword>
<keyword id="KW-0963">Cytoplasm</keyword>
<keyword id="KW-0378">Hydrolase</keyword>
<keyword id="KW-0479">Metal-binding</keyword>
<keyword id="KW-0645">Protease</keyword>
<keyword id="KW-1185">Reference proteome</keyword>
<keyword id="KW-0915">Sodium</keyword>
<keyword id="KW-0888">Threonine protease</keyword>
<gene>
    <name evidence="1" type="primary">hslV</name>
    <name type="ordered locus">BB_0296</name>
</gene>
<dbReference type="EC" id="3.4.25.2" evidence="1"/>
<dbReference type="EMBL" id="U43739">
    <property type="protein sequence ID" value="AAA85619.1"/>
    <property type="molecule type" value="Genomic_DNA"/>
</dbReference>
<dbReference type="EMBL" id="L76303">
    <property type="protein sequence ID" value="AAB51405.1"/>
    <property type="molecule type" value="Genomic_DNA"/>
</dbReference>
<dbReference type="EMBL" id="X96685">
    <property type="protein sequence ID" value="CAA65467.1"/>
    <property type="molecule type" value="Genomic_DNA"/>
</dbReference>
<dbReference type="EMBL" id="L40503">
    <property type="protein sequence ID" value="AAB04621.1"/>
    <property type="molecule type" value="Genomic_DNA"/>
</dbReference>
<dbReference type="EMBL" id="AE000783">
    <property type="protein sequence ID" value="AAC66652.1"/>
    <property type="molecule type" value="Genomic_DNA"/>
</dbReference>
<dbReference type="PIR" id="H70136">
    <property type="entry name" value="H70136"/>
</dbReference>
<dbReference type="RefSeq" id="NP_212430.1">
    <property type="nucleotide sequence ID" value="NC_001318.1"/>
</dbReference>
<dbReference type="RefSeq" id="WP_002556895.1">
    <property type="nucleotide sequence ID" value="NC_001318.1"/>
</dbReference>
<dbReference type="SMR" id="Q57209"/>
<dbReference type="STRING" id="224326.BB_0296"/>
<dbReference type="PaxDb" id="224326-BB_0296"/>
<dbReference type="EnsemblBacteria" id="AAC66652">
    <property type="protein sequence ID" value="AAC66652"/>
    <property type="gene ID" value="BB_0296"/>
</dbReference>
<dbReference type="GeneID" id="56567727"/>
<dbReference type="KEGG" id="bbu:BB_0296"/>
<dbReference type="PATRIC" id="fig|224326.49.peg.695"/>
<dbReference type="HOGENOM" id="CLU_093872_1_0_12"/>
<dbReference type="OrthoDB" id="9804884at2"/>
<dbReference type="Proteomes" id="UP000001807">
    <property type="component" value="Chromosome"/>
</dbReference>
<dbReference type="GO" id="GO:0009376">
    <property type="term" value="C:HslUV protease complex"/>
    <property type="evidence" value="ECO:0007669"/>
    <property type="project" value="UniProtKB-UniRule"/>
</dbReference>
<dbReference type="GO" id="GO:0005839">
    <property type="term" value="C:proteasome core complex"/>
    <property type="evidence" value="ECO:0007669"/>
    <property type="project" value="InterPro"/>
</dbReference>
<dbReference type="GO" id="GO:0046872">
    <property type="term" value="F:metal ion binding"/>
    <property type="evidence" value="ECO:0007669"/>
    <property type="project" value="UniProtKB-KW"/>
</dbReference>
<dbReference type="GO" id="GO:0004298">
    <property type="term" value="F:threonine-type endopeptidase activity"/>
    <property type="evidence" value="ECO:0007669"/>
    <property type="project" value="UniProtKB-KW"/>
</dbReference>
<dbReference type="GO" id="GO:0051603">
    <property type="term" value="P:proteolysis involved in protein catabolic process"/>
    <property type="evidence" value="ECO:0007669"/>
    <property type="project" value="InterPro"/>
</dbReference>
<dbReference type="CDD" id="cd01913">
    <property type="entry name" value="protease_HslV"/>
    <property type="match status" value="1"/>
</dbReference>
<dbReference type="Gene3D" id="3.60.20.10">
    <property type="entry name" value="Glutamine Phosphoribosylpyrophosphate, subunit 1, domain 1"/>
    <property type="match status" value="1"/>
</dbReference>
<dbReference type="HAMAP" id="MF_00248">
    <property type="entry name" value="HslV"/>
    <property type="match status" value="1"/>
</dbReference>
<dbReference type="InterPro" id="IPR022281">
    <property type="entry name" value="ATP-dep_Prtase_HsIV_su"/>
</dbReference>
<dbReference type="InterPro" id="IPR029055">
    <property type="entry name" value="Ntn_hydrolases_N"/>
</dbReference>
<dbReference type="InterPro" id="IPR001353">
    <property type="entry name" value="Proteasome_sua/b"/>
</dbReference>
<dbReference type="InterPro" id="IPR023333">
    <property type="entry name" value="Proteasome_suB-type"/>
</dbReference>
<dbReference type="NCBIfam" id="TIGR03692">
    <property type="entry name" value="ATP_dep_HslV"/>
    <property type="match status" value="1"/>
</dbReference>
<dbReference type="NCBIfam" id="NF003964">
    <property type="entry name" value="PRK05456.1"/>
    <property type="match status" value="1"/>
</dbReference>
<dbReference type="PANTHER" id="PTHR32194:SF0">
    <property type="entry name" value="ATP-DEPENDENT PROTEASE SUBUNIT HSLV"/>
    <property type="match status" value="1"/>
</dbReference>
<dbReference type="PANTHER" id="PTHR32194">
    <property type="entry name" value="METALLOPROTEASE TLDD"/>
    <property type="match status" value="1"/>
</dbReference>
<dbReference type="Pfam" id="PF00227">
    <property type="entry name" value="Proteasome"/>
    <property type="match status" value="1"/>
</dbReference>
<dbReference type="PIRSF" id="PIRSF039093">
    <property type="entry name" value="HslV"/>
    <property type="match status" value="1"/>
</dbReference>
<dbReference type="SUPFAM" id="SSF56235">
    <property type="entry name" value="N-terminal nucleophile aminohydrolases (Ntn hydrolases)"/>
    <property type="match status" value="1"/>
</dbReference>
<dbReference type="PROSITE" id="PS51476">
    <property type="entry name" value="PROTEASOME_BETA_2"/>
    <property type="match status" value="1"/>
</dbReference>